<sequence>MGKKTKRTADSSSSEDEEEYVVEKVLDRRVVKGQVEYLLKWKGFSEEHNTWEPEKNLDCPELISEFMKKYKKMKEGENNKPREKSESNKRKSNFSNSADDIKSKKKREQSNDIARGFERGLEPEKIIGATDSCGDLMFLMKWKDTDEADLVLAKEANVKCPQIVIAFYEERLTWHAYPEDAENKEKETAKS</sequence>
<accession>P45973</accession>
<accession>B2R8T9</accession>
<name>CBX5_HUMAN</name>
<proteinExistence type="evidence at protein level"/>
<dbReference type="EMBL" id="S62077">
    <property type="protein sequence ID" value="AAB26994.1"/>
    <property type="molecule type" value="mRNA"/>
</dbReference>
<dbReference type="EMBL" id="L07515">
    <property type="protein sequence ID" value="AAA72327.1"/>
    <property type="molecule type" value="mRNA"/>
</dbReference>
<dbReference type="EMBL" id="AK313506">
    <property type="protein sequence ID" value="BAG36286.1"/>
    <property type="molecule type" value="mRNA"/>
</dbReference>
<dbReference type="EMBL" id="CH471054">
    <property type="protein sequence ID" value="EAW96759.1"/>
    <property type="molecule type" value="Genomic_DNA"/>
</dbReference>
<dbReference type="EMBL" id="BC006821">
    <property type="protein sequence ID" value="AAH06821.1"/>
    <property type="molecule type" value="mRNA"/>
</dbReference>
<dbReference type="EMBL" id="U26311">
    <property type="protein sequence ID" value="AAC50553.1"/>
    <property type="molecule type" value="mRNA"/>
</dbReference>
<dbReference type="CCDS" id="CCDS8875.1"/>
<dbReference type="PIR" id="G01808">
    <property type="entry name" value="G01808"/>
</dbReference>
<dbReference type="RefSeq" id="NP_001120793.1">
    <property type="nucleotide sequence ID" value="NM_001127321.1"/>
</dbReference>
<dbReference type="RefSeq" id="NP_001120794.1">
    <property type="nucleotide sequence ID" value="NM_001127322.1"/>
</dbReference>
<dbReference type="RefSeq" id="NP_036249.1">
    <property type="nucleotide sequence ID" value="NM_012117.3"/>
</dbReference>
<dbReference type="PDB" id="3FDT">
    <property type="method" value="X-ray"/>
    <property type="resolution" value="2.00 A"/>
    <property type="chains" value="A=18-75"/>
</dbReference>
<dbReference type="PDB" id="3I3C">
    <property type="method" value="X-ray"/>
    <property type="resolution" value="2.48 A"/>
    <property type="chains" value="A/B/C/D=110-173"/>
</dbReference>
<dbReference type="PDB" id="8UXQ">
    <property type="method" value="EM"/>
    <property type="resolution" value="6.30 A"/>
    <property type="chains" value="A/C=2-191"/>
</dbReference>
<dbReference type="PDBsum" id="3FDT"/>
<dbReference type="PDBsum" id="3I3C"/>
<dbReference type="PDBsum" id="8UXQ"/>
<dbReference type="BMRB" id="P45973"/>
<dbReference type="EMDB" id="EMD-42774"/>
<dbReference type="SMR" id="P45973"/>
<dbReference type="BioGRID" id="117030">
    <property type="interactions" value="351"/>
</dbReference>
<dbReference type="CORUM" id="P45973"/>
<dbReference type="DIP" id="DIP-5986N"/>
<dbReference type="FunCoup" id="P45973">
    <property type="interactions" value="2560"/>
</dbReference>
<dbReference type="IntAct" id="P45973">
    <property type="interactions" value="264"/>
</dbReference>
<dbReference type="MINT" id="P45973"/>
<dbReference type="STRING" id="9606.ENSP00000209875"/>
<dbReference type="BindingDB" id="P45973"/>
<dbReference type="ChEMBL" id="CHEMBL3826867"/>
<dbReference type="DrugBank" id="DB09130">
    <property type="generic name" value="Copper"/>
</dbReference>
<dbReference type="MoonDB" id="P45973">
    <property type="type" value="Predicted"/>
</dbReference>
<dbReference type="GlyGen" id="P45973">
    <property type="glycosylation" value="2 sites, 1 O-linked glycan (2 sites)"/>
</dbReference>
<dbReference type="iPTMnet" id="P45973"/>
<dbReference type="PhosphoSitePlus" id="P45973"/>
<dbReference type="SwissPalm" id="P45973"/>
<dbReference type="BioMuta" id="CBX5"/>
<dbReference type="DMDM" id="1170338"/>
<dbReference type="jPOST" id="P45973"/>
<dbReference type="MassIVE" id="P45973"/>
<dbReference type="PaxDb" id="9606-ENSP00000209875"/>
<dbReference type="PeptideAtlas" id="P45973"/>
<dbReference type="ProteomicsDB" id="55691"/>
<dbReference type="Pumba" id="P45973"/>
<dbReference type="TopDownProteomics" id="P45973"/>
<dbReference type="ABCD" id="P45973">
    <property type="antibodies" value="2 sequenced antibodies"/>
</dbReference>
<dbReference type="Antibodypedia" id="4311">
    <property type="antibodies" value="934 antibodies from 44 providers"/>
</dbReference>
<dbReference type="DNASU" id="23468"/>
<dbReference type="Ensembl" id="ENST00000209875.9">
    <property type="protein sequence ID" value="ENSP00000209875.4"/>
    <property type="gene ID" value="ENSG00000094916.16"/>
</dbReference>
<dbReference type="Ensembl" id="ENST00000439541.6">
    <property type="protein sequence ID" value="ENSP00000401009.2"/>
    <property type="gene ID" value="ENSG00000094916.16"/>
</dbReference>
<dbReference type="Ensembl" id="ENST00000550411.5">
    <property type="protein sequence ID" value="ENSP00000449207.1"/>
    <property type="gene ID" value="ENSG00000094916.16"/>
</dbReference>
<dbReference type="GeneID" id="23468"/>
<dbReference type="KEGG" id="hsa:23468"/>
<dbReference type="MANE-Select" id="ENST00000209875.9">
    <property type="protein sequence ID" value="ENSP00000209875.4"/>
    <property type="RefSeq nucleotide sequence ID" value="NM_012117.3"/>
    <property type="RefSeq protein sequence ID" value="NP_036249.1"/>
</dbReference>
<dbReference type="AGR" id="HGNC:1555"/>
<dbReference type="CTD" id="23468"/>
<dbReference type="DisGeNET" id="23468"/>
<dbReference type="GeneCards" id="CBX5"/>
<dbReference type="HGNC" id="HGNC:1555">
    <property type="gene designation" value="CBX5"/>
</dbReference>
<dbReference type="HPA" id="ENSG00000094916">
    <property type="expression patterns" value="Tissue enhanced (choroid)"/>
</dbReference>
<dbReference type="MIM" id="604478">
    <property type="type" value="gene"/>
</dbReference>
<dbReference type="neXtProt" id="NX_P45973"/>
<dbReference type="OpenTargets" id="ENSG00000094916"/>
<dbReference type="PharmGKB" id="PA26130"/>
<dbReference type="VEuPathDB" id="HostDB:ENSG00000094916"/>
<dbReference type="eggNOG" id="KOG1911">
    <property type="taxonomic scope" value="Eukaryota"/>
</dbReference>
<dbReference type="GeneTree" id="ENSGT00940000158801"/>
<dbReference type="HOGENOM" id="CLU_045874_1_0_1"/>
<dbReference type="InParanoid" id="P45973"/>
<dbReference type="OMA" id="TSCAMGK"/>
<dbReference type="OrthoDB" id="433924at2759"/>
<dbReference type="PAN-GO" id="P45973">
    <property type="GO annotations" value="5 GO annotations based on evolutionary models"/>
</dbReference>
<dbReference type="PhylomeDB" id="P45973"/>
<dbReference type="TreeFam" id="TF350503"/>
<dbReference type="PathwayCommons" id="P45973"/>
<dbReference type="Reactome" id="R-HSA-4551638">
    <property type="pathway name" value="SUMOylation of chromatin organization proteins"/>
</dbReference>
<dbReference type="Reactome" id="R-HSA-8953750">
    <property type="pathway name" value="Transcriptional Regulation by E2F6"/>
</dbReference>
<dbReference type="Reactome" id="R-HSA-983231">
    <property type="pathway name" value="Factors involved in megakaryocyte development and platelet production"/>
</dbReference>
<dbReference type="Reactome" id="R-HSA-9843940">
    <property type="pathway name" value="Regulation of endogenous retroelements by KRAB-ZFP proteins"/>
</dbReference>
<dbReference type="SignaLink" id="P45973"/>
<dbReference type="SIGNOR" id="P45973"/>
<dbReference type="BioGRID-ORCS" id="23468">
    <property type="hits" value="11 hits in 1158 CRISPR screens"/>
</dbReference>
<dbReference type="CD-CODE" id="208F8600">
    <property type="entry name" value="Synthetic Condensate 000366"/>
</dbReference>
<dbReference type="CD-CODE" id="3F4CB227">
    <property type="entry name" value="Synthetic Condensate 000322"/>
</dbReference>
<dbReference type="CD-CODE" id="8BB8BA7F">
    <property type="entry name" value="Synthetic Condensate 000324"/>
</dbReference>
<dbReference type="CD-CODE" id="8DF372A2">
    <property type="entry name" value="Synthetic Condensate 000069"/>
</dbReference>
<dbReference type="CD-CODE" id="91857CE7">
    <property type="entry name" value="Nucleolus"/>
</dbReference>
<dbReference type="CD-CODE" id="98A5DA6D">
    <property type="entry name" value="Synthetic Condensate 000066"/>
</dbReference>
<dbReference type="CD-CODE" id="9F05356D">
    <property type="entry name" value="Synthetic Condensate 000062"/>
</dbReference>
<dbReference type="CD-CODE" id="AF287C13">
    <property type="entry name" value="Synthetic Condensate 000326"/>
</dbReference>
<dbReference type="CD-CODE" id="B57B8AD8">
    <property type="entry name" value="Heterochromatin"/>
</dbReference>
<dbReference type="CD-CODE" id="C65B6D56">
    <property type="entry name" value="Synthetic Condensate 000076"/>
</dbReference>
<dbReference type="CD-CODE" id="F5834E66">
    <property type="entry name" value="Synthetic Condensate 000310"/>
</dbReference>
<dbReference type="ChiTaRS" id="CBX5">
    <property type="organism name" value="human"/>
</dbReference>
<dbReference type="EvolutionaryTrace" id="P45973"/>
<dbReference type="GeneWiki" id="CBX5_(gene)"/>
<dbReference type="GenomeRNAi" id="23468"/>
<dbReference type="Pharos" id="P45973">
    <property type="development level" value="Tbio"/>
</dbReference>
<dbReference type="PRO" id="PR:P45973"/>
<dbReference type="Proteomes" id="UP000005640">
    <property type="component" value="Chromosome 12"/>
</dbReference>
<dbReference type="RNAct" id="P45973">
    <property type="molecule type" value="protein"/>
</dbReference>
<dbReference type="Bgee" id="ENSG00000094916">
    <property type="expression patterns" value="Expressed in tendon of biceps brachii and 202 other cell types or tissues"/>
</dbReference>
<dbReference type="ExpressionAtlas" id="P45973">
    <property type="expression patterns" value="baseline and differential"/>
</dbReference>
<dbReference type="GO" id="GO:0010369">
    <property type="term" value="C:chromocenter"/>
    <property type="evidence" value="ECO:0007669"/>
    <property type="project" value="Ensembl"/>
</dbReference>
<dbReference type="GO" id="GO:0000781">
    <property type="term" value="C:chromosome, telomeric region"/>
    <property type="evidence" value="ECO:0007005"/>
    <property type="project" value="BHF-UCL"/>
</dbReference>
<dbReference type="GO" id="GO:0000792">
    <property type="term" value="C:heterochromatin"/>
    <property type="evidence" value="ECO:0000304"/>
    <property type="project" value="ProtInc"/>
</dbReference>
<dbReference type="GO" id="GO:0000118">
    <property type="term" value="C:histone deacetylase complex"/>
    <property type="evidence" value="ECO:0000250"/>
    <property type="project" value="BHF-UCL"/>
</dbReference>
<dbReference type="GO" id="GO:0035097">
    <property type="term" value="C:histone methyltransferase complex"/>
    <property type="evidence" value="ECO:0000250"/>
    <property type="project" value="BHF-UCL"/>
</dbReference>
<dbReference type="GO" id="GO:0000776">
    <property type="term" value="C:kinetochore"/>
    <property type="evidence" value="ECO:0007669"/>
    <property type="project" value="Ensembl"/>
</dbReference>
<dbReference type="GO" id="GO:0005635">
    <property type="term" value="C:nuclear envelope"/>
    <property type="evidence" value="ECO:0000304"/>
    <property type="project" value="ProtInc"/>
</dbReference>
<dbReference type="GO" id="GO:0005730">
    <property type="term" value="C:nucleolus"/>
    <property type="evidence" value="ECO:0000314"/>
    <property type="project" value="BHF-UCL"/>
</dbReference>
<dbReference type="GO" id="GO:0005654">
    <property type="term" value="C:nucleoplasm"/>
    <property type="evidence" value="ECO:0000314"/>
    <property type="project" value="HPA"/>
</dbReference>
<dbReference type="GO" id="GO:0005634">
    <property type="term" value="C:nucleus"/>
    <property type="evidence" value="ECO:0000314"/>
    <property type="project" value="UniProtKB"/>
</dbReference>
<dbReference type="GO" id="GO:0005721">
    <property type="term" value="C:pericentric heterochromatin"/>
    <property type="evidence" value="ECO:0000250"/>
    <property type="project" value="BHF-UCL"/>
</dbReference>
<dbReference type="GO" id="GO:0032991">
    <property type="term" value="C:protein-containing complex"/>
    <property type="evidence" value="ECO:0000314"/>
    <property type="project" value="UniProtKB"/>
</dbReference>
<dbReference type="GO" id="GO:1990904">
    <property type="term" value="C:ribonucleoprotein complex"/>
    <property type="evidence" value="ECO:0000314"/>
    <property type="project" value="UniProtKB"/>
</dbReference>
<dbReference type="GO" id="GO:0090734">
    <property type="term" value="C:site of DNA damage"/>
    <property type="evidence" value="ECO:0000315"/>
    <property type="project" value="UniProtKB"/>
</dbReference>
<dbReference type="GO" id="GO:0017053">
    <property type="term" value="C:transcription repressor complex"/>
    <property type="evidence" value="ECO:0000250"/>
    <property type="project" value="BHF-UCL"/>
</dbReference>
<dbReference type="GO" id="GO:0003682">
    <property type="term" value="F:chromatin binding"/>
    <property type="evidence" value="ECO:0000318"/>
    <property type="project" value="GO_Central"/>
</dbReference>
<dbReference type="GO" id="GO:0140297">
    <property type="term" value="F:DNA-binding transcription factor binding"/>
    <property type="evidence" value="ECO:0000250"/>
    <property type="project" value="BHF-UCL"/>
</dbReference>
<dbReference type="GO" id="GO:0042826">
    <property type="term" value="F:histone deacetylase binding"/>
    <property type="evidence" value="ECO:0007669"/>
    <property type="project" value="Ensembl"/>
</dbReference>
<dbReference type="GO" id="GO:0062072">
    <property type="term" value="F:histone H3K9me2/3 reader activity"/>
    <property type="evidence" value="ECO:0000314"/>
    <property type="project" value="UniProtKB"/>
</dbReference>
<dbReference type="GO" id="GO:0042802">
    <property type="term" value="F:identical protein binding"/>
    <property type="evidence" value="ECO:0000353"/>
    <property type="project" value="IntAct"/>
</dbReference>
<dbReference type="GO" id="GO:0035064">
    <property type="term" value="F:methylated histone binding"/>
    <property type="evidence" value="ECO:0000318"/>
    <property type="project" value="GO_Central"/>
</dbReference>
<dbReference type="GO" id="GO:0044877">
    <property type="term" value="F:protein-containing complex binding"/>
    <property type="evidence" value="ECO:0000314"/>
    <property type="project" value="UniProtKB"/>
</dbReference>
<dbReference type="GO" id="GO:0030674">
    <property type="term" value="F:protein-macromolecule adaptor activity"/>
    <property type="evidence" value="ECO:0000250"/>
    <property type="project" value="BHF-UCL"/>
</dbReference>
<dbReference type="GO" id="GO:0043021">
    <property type="term" value="F:ribonucleoprotein complex binding"/>
    <property type="evidence" value="ECO:0000314"/>
    <property type="project" value="UniProtKB"/>
</dbReference>
<dbReference type="GO" id="GO:0006974">
    <property type="term" value="P:DNA damage response"/>
    <property type="evidence" value="ECO:0000315"/>
    <property type="project" value="UniProtKB"/>
</dbReference>
<dbReference type="GO" id="GO:0031507">
    <property type="term" value="P:heterochromatin formation"/>
    <property type="evidence" value="ECO:0000318"/>
    <property type="project" value="GO_Central"/>
</dbReference>
<dbReference type="GO" id="GO:0045892">
    <property type="term" value="P:negative regulation of DNA-templated transcription"/>
    <property type="evidence" value="ECO:0000314"/>
    <property type="project" value="UniProtKB"/>
</dbReference>
<dbReference type="GO" id="GO:0000122">
    <property type="term" value="P:negative regulation of transcription by RNA polymerase II"/>
    <property type="evidence" value="ECO:0000315"/>
    <property type="project" value="UniProtKB"/>
</dbReference>
<dbReference type="CDD" id="cd18651">
    <property type="entry name" value="CD_HP1alpha_Cbx5"/>
    <property type="match status" value="1"/>
</dbReference>
<dbReference type="CDD" id="cd18655">
    <property type="entry name" value="CSD_HP1alpha_Cbx5"/>
    <property type="match status" value="1"/>
</dbReference>
<dbReference type="FunFam" id="2.40.50.40:FF:000007">
    <property type="entry name" value="Chromobox protein homolog 1"/>
    <property type="match status" value="1"/>
</dbReference>
<dbReference type="FunFam" id="2.40.50.40:FF:000009">
    <property type="entry name" value="chromobox protein homolog 1"/>
    <property type="match status" value="1"/>
</dbReference>
<dbReference type="Gene3D" id="2.40.50.40">
    <property type="match status" value="2"/>
</dbReference>
<dbReference type="IDEAL" id="IID00659"/>
<dbReference type="InterPro" id="IPR016197">
    <property type="entry name" value="Chromo-like_dom_sf"/>
</dbReference>
<dbReference type="InterPro" id="IPR000953">
    <property type="entry name" value="Chromo/chromo_shadow_dom"/>
</dbReference>
<dbReference type="InterPro" id="IPR017984">
    <property type="entry name" value="Chromo_dom_subgr"/>
</dbReference>
<dbReference type="InterPro" id="IPR023780">
    <property type="entry name" value="Chromo_domain"/>
</dbReference>
<dbReference type="InterPro" id="IPR008251">
    <property type="entry name" value="Chromo_shadow_dom"/>
</dbReference>
<dbReference type="InterPro" id="IPR023779">
    <property type="entry name" value="Chromodomain_CS"/>
</dbReference>
<dbReference type="InterPro" id="IPR051219">
    <property type="entry name" value="Heterochromatin_chromo-domain"/>
</dbReference>
<dbReference type="PANTHER" id="PTHR22812">
    <property type="entry name" value="CHROMOBOX PROTEIN"/>
    <property type="match status" value="1"/>
</dbReference>
<dbReference type="Pfam" id="PF00385">
    <property type="entry name" value="Chromo"/>
    <property type="match status" value="1"/>
</dbReference>
<dbReference type="Pfam" id="PF01393">
    <property type="entry name" value="Chromo_shadow"/>
    <property type="match status" value="1"/>
</dbReference>
<dbReference type="PRINTS" id="PR00504">
    <property type="entry name" value="CHROMODOMAIN"/>
</dbReference>
<dbReference type="SMART" id="SM00298">
    <property type="entry name" value="CHROMO"/>
    <property type="match status" value="2"/>
</dbReference>
<dbReference type="SMART" id="SM00300">
    <property type="entry name" value="ChSh"/>
    <property type="match status" value="1"/>
</dbReference>
<dbReference type="SUPFAM" id="SSF54160">
    <property type="entry name" value="Chromo domain-like"/>
    <property type="match status" value="2"/>
</dbReference>
<dbReference type="PROSITE" id="PS00598">
    <property type="entry name" value="CHROMO_1"/>
    <property type="match status" value="1"/>
</dbReference>
<dbReference type="PROSITE" id="PS50013">
    <property type="entry name" value="CHROMO_2"/>
    <property type="match status" value="2"/>
</dbReference>
<gene>
    <name type="primary">CBX5</name>
    <name type="synonym">HP1A</name>
</gene>
<evidence type="ECO:0000250" key="1"/>
<evidence type="ECO:0000250" key="2">
    <source>
        <dbReference type="UniProtKB" id="Q13185"/>
    </source>
</evidence>
<evidence type="ECO:0000250" key="3">
    <source>
        <dbReference type="UniProtKB" id="Q61686"/>
    </source>
</evidence>
<evidence type="ECO:0000255" key="4">
    <source>
        <dbReference type="PROSITE-ProRule" id="PRU00053"/>
    </source>
</evidence>
<evidence type="ECO:0000256" key="5">
    <source>
        <dbReference type="SAM" id="MobiDB-lite"/>
    </source>
</evidence>
<evidence type="ECO:0000269" key="6">
    <source>
    </source>
</evidence>
<evidence type="ECO:0000269" key="7">
    <source>
    </source>
</evidence>
<evidence type="ECO:0000269" key="8">
    <source>
    </source>
</evidence>
<evidence type="ECO:0000269" key="9">
    <source>
    </source>
</evidence>
<evidence type="ECO:0000269" key="10">
    <source>
    </source>
</evidence>
<evidence type="ECO:0000269" key="11">
    <source>
    </source>
</evidence>
<evidence type="ECO:0000269" key="12">
    <source>
    </source>
</evidence>
<evidence type="ECO:0000269" key="13">
    <source>
    </source>
</evidence>
<evidence type="ECO:0000269" key="14">
    <source>
    </source>
</evidence>
<evidence type="ECO:0000269" key="15">
    <source>
    </source>
</evidence>
<evidence type="ECO:0000269" key="16">
    <source>
    </source>
</evidence>
<evidence type="ECO:0000269" key="17">
    <source>
    </source>
</evidence>
<evidence type="ECO:0000269" key="18">
    <source>
    </source>
</evidence>
<evidence type="ECO:0000269" key="19">
    <source>
    </source>
</evidence>
<evidence type="ECO:0000269" key="20">
    <source>
    </source>
</evidence>
<evidence type="ECO:0000269" key="21">
    <source>
    </source>
</evidence>
<evidence type="ECO:0000269" key="22">
    <source>
    </source>
</evidence>
<evidence type="ECO:0000269" key="23">
    <source>
    </source>
</evidence>
<evidence type="ECO:0000269" key="24">
    <source>
    </source>
</evidence>
<evidence type="ECO:0000269" key="25">
    <source>
    </source>
</evidence>
<evidence type="ECO:0000269" key="26">
    <source>
    </source>
</evidence>
<evidence type="ECO:0000269" key="27">
    <source>
    </source>
</evidence>
<evidence type="ECO:0000269" key="28">
    <source>
    </source>
</evidence>
<evidence type="ECO:0000269" key="29">
    <source>
    </source>
</evidence>
<evidence type="ECO:0000269" key="30">
    <source>
    </source>
</evidence>
<evidence type="ECO:0000305" key="31">
    <source>
    </source>
</evidence>
<evidence type="ECO:0000305" key="32">
    <source>
    </source>
</evidence>
<evidence type="ECO:0007744" key="33">
    <source>
    </source>
</evidence>
<evidence type="ECO:0007744" key="34">
    <source>
    </source>
</evidence>
<evidence type="ECO:0007744" key="35">
    <source>
    </source>
</evidence>
<evidence type="ECO:0007744" key="36">
    <source>
    </source>
</evidence>
<evidence type="ECO:0007744" key="37">
    <source>
    </source>
</evidence>
<evidence type="ECO:0007744" key="38">
    <source>
    </source>
</evidence>
<evidence type="ECO:0007744" key="39">
    <source>
    </source>
</evidence>
<evidence type="ECO:0007744" key="40">
    <source>
    </source>
</evidence>
<evidence type="ECO:0007744" key="41">
    <source>
    </source>
</evidence>
<evidence type="ECO:0007744" key="42">
    <source>
    </source>
</evidence>
<evidence type="ECO:0007744" key="43">
    <source>
    </source>
</evidence>
<evidence type="ECO:0007829" key="44">
    <source>
        <dbReference type="PDB" id="3FDT"/>
    </source>
</evidence>
<evidence type="ECO:0007829" key="45">
    <source>
        <dbReference type="PDB" id="3I3C"/>
    </source>
</evidence>
<comment type="function">
    <text evidence="16 18">Component of heterochromatin that recognizes and binds histone H3 tails methylated at 'Lys-9' (H3K9me), leading to epigenetic repression. In contrast, it is excluded from chromatin when 'Tyr-41' of histone H3 is phosphorylated (H3Y41ph) (PubMed:19783980). May contribute to the association of heterochromatin with the inner nuclear membrane by interactions with the lamin-B receptor (LBR) (PubMed:19783980). Involved in the formation of kinetochore through interaction with the MIS12 complex subunit NSL1 (PubMed:19783980, PubMed:20231385). Required for the formation of the inner centromere (PubMed:20231385).</text>
</comment>
<comment type="subunit">
    <text evidence="3 7 8 9 11 12 13 14 15 17 18 20 21 22 23 24 25 26 27 28 29 30">Homodimer (PubMed:20819937). Interacts with histone H3 methylated at 'Lys-9' (PubMed:11242053, PubMed:21047797). Interacts (via Chromo 2; shadow subtype domain) with the MIS12 complex subunit NSL1; the interaction is direct, involves dimeric CBX5, and occurs during interphase (PubMed:15502821, PubMed:20231385, PubMed:20819937). Interacts with POGZ; POGZ and PXVXL motif-containing proteins such as INCENP and TRIM28 compete for interaction with CBX5 (PubMed:20562864, PubMed:20850016, PubMed:21346195). Interacts with LRIF1 (via PxVxL motif) (PubMed:23542155). Interacts with INCENP (PubMed:20562864). Interacts with TRIM24 (PubMed:11313457). Interacts (via the chromoshadow domain) with ATRX; the interaction is direct (PubMed:15882967). Interacts (via the chromoshadow domain) with CHAF1A; the interaction is direct (PubMed:15882967). Interacts (via the chromoshadow domain) with LBR; the interaction is direct (PubMed:15882967, PubMed:9169472). Interacts (via the chromoshadow domain) with NIPBL; the interaction is direct (PubMed:15882967). Interacts (via the chromoshadow domain) with SP100; the interaction is direct (PubMed:15882967). Interacts (via the chromoshadow domain) with STAM2; the interaction is direct (PubMed:15882967). Interacts (via the chromoshadow domain) with TRIM28; the interaction is direct (PubMed:15882967). Interacts (via the chromoshadow domain) with CBX3; the interaction is direct (PubMed:9169472). Interacts with PRR14 (via N-terminus) (PubMed:25906157). Interacts with RRP1B (PubMed:19710015). Interacts with HNRNPU (via C-terminus); this interaction is, at least in part, RNA-dependent (PubMed:19617346). Interacts with ZNF263; recruited to the SIX3 promoter along with other proteins involved in chromatin modification and transcriptional corepression where it contributes to transcriptional repression (PubMed:32051553). Interacts with AURKB during mitosis (PubMed:20231385). Interacts with CHAMP1 (PubMed:20850016). Interacts with BAHD1 (PubMed:19666599). Interacts with HP1BP3 (PubMed:20042602). Interacts with CHD3 (PubMed:28977666). Interacts with CHD4 (PubMed:28977666). Interacts with SMYD5 (By similarity). Interacts with KMT5B (By similarity). Interacts with KMT5C (By similarity).</text>
</comment>
<comment type="subunit">
    <text evidence="10">(Microbial infection) Interacts with JC virus agnoprotein; this interaction induces the dissociation of CBX5 from LBR, resulting in destabilization of the nuclear envelope.</text>
</comment>
<comment type="interaction">
    <interactant intactId="EBI-78219">
        <id>P45973</id>
    </interactant>
    <interactant intactId="EBI-1764854">
        <id>Q9H2P0</id>
        <label>ADNP</label>
    </interactant>
    <organismsDiffer>false</organismsDiffer>
    <experiments>3</experiments>
</comment>
<comment type="interaction">
    <interactant intactId="EBI-78219">
        <id>P45973</id>
    </interactant>
    <interactant intactId="EBI-2875816">
        <id>Q9NP61</id>
        <label>ARFGAP3</label>
    </interactant>
    <organismsDiffer>false</organismsDiffer>
    <experiments>3</experiments>
</comment>
<comment type="interaction">
    <interactant intactId="EBI-78219">
        <id>P45973</id>
    </interactant>
    <interactant intactId="EBI-20151086">
        <id>O75143-2</id>
        <label>ATG13</label>
    </interactant>
    <organismsDiffer>false</organismsDiffer>
    <experiments>3</experiments>
</comment>
<comment type="interaction">
    <interactant intactId="EBI-78219">
        <id>P45973</id>
    </interactant>
    <interactant intactId="EBI-396461">
        <id>P46100</id>
        <label>ATRX</label>
    </interactant>
    <organismsDiffer>false</organismsDiffer>
    <experiments>2</experiments>
</comment>
<comment type="interaction">
    <interactant intactId="EBI-78219">
        <id>P45973</id>
    </interactant>
    <interactant intactId="EBI-742750">
        <id>Q8TBE0</id>
        <label>BAHD1</label>
    </interactant>
    <organismsDiffer>false</organismsDiffer>
    <experiments>3</experiments>
</comment>
<comment type="interaction">
    <interactant intactId="EBI-78219">
        <id>P45973</id>
    </interactant>
    <interactant intactId="EBI-78219">
        <id>P45973</id>
        <label>CBX5</label>
    </interactant>
    <organismsDiffer>false</organismsDiffer>
    <experiments>2</experiments>
</comment>
<comment type="interaction">
    <interactant intactId="EBI-78219">
        <id>P45973</id>
    </interactant>
    <interactant intactId="EBI-1020839">
        <id>Q13111</id>
        <label>CHAF1A</label>
    </interactant>
    <organismsDiffer>false</organismsDiffer>
    <experiments>8</experiments>
</comment>
<comment type="interaction">
    <interactant intactId="EBI-78219">
        <id>P45973</id>
    </interactant>
    <interactant intactId="EBI-9087876">
        <id>P48730-2</id>
        <label>CSNK1D</label>
    </interactant>
    <organismsDiffer>false</organismsDiffer>
    <experiments>3</experiments>
</comment>
<comment type="interaction">
    <interactant intactId="EBI-78219">
        <id>P45973</id>
    </interactant>
    <interactant intactId="EBI-719232">
        <id>Q9UMR2</id>
        <label>DDX19B</label>
    </interactant>
    <organismsDiffer>false</organismsDiffer>
    <experiments>3</experiments>
</comment>
<comment type="interaction">
    <interactant intactId="EBI-78219">
        <id>P45973</id>
    </interactant>
    <interactant intactId="EBI-715087">
        <id>P09471</id>
        <label>GNAO1</label>
    </interactant>
    <organismsDiffer>false</organismsDiffer>
    <experiments>3</experiments>
</comment>
<comment type="interaction">
    <interactant intactId="EBI-78219">
        <id>P45973</id>
    </interactant>
    <interactant intactId="EBI-120658">
        <id>P84243</id>
        <label>H3-3B</label>
    </interactant>
    <organismsDiffer>false</organismsDiffer>
    <experiments>3</experiments>
</comment>
<comment type="interaction">
    <interactant intactId="EBI-78219">
        <id>P45973</id>
    </interactant>
    <interactant intactId="EBI-358900">
        <id>Q16695</id>
        <label>H3-4</label>
    </interactant>
    <organismsDiffer>false</organismsDiffer>
    <experiments>2</experiments>
</comment>
<comment type="interaction">
    <interactant intactId="EBI-78219">
        <id>P45973</id>
    </interactant>
    <interactant intactId="EBI-79722">
        <id>P68431</id>
        <label>H3C12</label>
    </interactant>
    <organismsDiffer>false</organismsDiffer>
    <experiments>11</experiments>
</comment>
<comment type="interaction">
    <interactant intactId="EBI-78219">
        <id>P45973</id>
    </interactant>
    <interactant intactId="EBI-302023">
        <id>P62805</id>
        <label>H4C9</label>
    </interactant>
    <organismsDiffer>false</organismsDiffer>
    <experiments>3</experiments>
</comment>
<comment type="interaction">
    <interactant intactId="EBI-78219">
        <id>P45973</id>
    </interactant>
    <interactant intactId="EBI-307907">
        <id>Q9NQS7</id>
        <label>INCENP</label>
    </interactant>
    <organismsDiffer>false</organismsDiffer>
    <experiments>11</experiments>
</comment>
<comment type="interaction">
    <interactant intactId="EBI-78219">
        <id>P45973</id>
    </interactant>
    <interactant intactId="EBI-2339312">
        <id>P28838</id>
        <label>LAP3</label>
    </interactant>
    <organismsDiffer>false</organismsDiffer>
    <experiments>3</experiments>
</comment>
<comment type="interaction">
    <interactant intactId="EBI-78219">
        <id>P45973</id>
    </interactant>
    <interactant intactId="EBI-1055147">
        <id>Q14739</id>
        <label>LBR</label>
    </interactant>
    <organismsDiffer>false</organismsDiffer>
    <experiments>4</experiments>
</comment>
<comment type="interaction">
    <interactant intactId="EBI-78219">
        <id>P45973</id>
    </interactant>
    <interactant intactId="EBI-2340947">
        <id>Q8N448</id>
        <label>LNX2</label>
    </interactant>
    <organismsDiffer>false</organismsDiffer>
    <experiments>3</experiments>
</comment>
<comment type="interaction">
    <interactant intactId="EBI-78219">
        <id>P45973</id>
    </interactant>
    <interactant intactId="EBI-473196">
        <id>Q5T3J3</id>
        <label>LRIF1</label>
    </interactant>
    <organismsDiffer>false</organismsDiffer>
    <experiments>11</experiments>
</comment>
<comment type="interaction">
    <interactant intactId="EBI-78219">
        <id>P45973</id>
    </interactant>
    <interactant intactId="EBI-867196">
        <id>Q9UIS9</id>
        <label>MBD1</label>
    </interactant>
    <organismsDiffer>false</organismsDiffer>
    <experiments>6</experiments>
</comment>
<comment type="interaction">
    <interactant intactId="EBI-78219">
        <id>P45973</id>
    </interactant>
    <interactant intactId="EBI-11337904">
        <id>Q14728</id>
        <label>MFSD10</label>
    </interactant>
    <organismsDiffer>false</organismsDiffer>
    <experiments>3</experiments>
</comment>
<comment type="interaction">
    <interactant intactId="EBI-78219">
        <id>P45973</id>
    </interactant>
    <interactant intactId="EBI-447544">
        <id>P01106</id>
        <label>MYC</label>
    </interactant>
    <organismsDiffer>false</organismsDiffer>
    <experiments>3</experiments>
</comment>
<comment type="interaction">
    <interactant intactId="EBI-78219">
        <id>P45973</id>
    </interactant>
    <interactant intactId="EBI-3390132">
        <id>Q9BZ95</id>
        <label>NSD3</label>
    </interactant>
    <organismsDiffer>false</organismsDiffer>
    <experiments>2</experiments>
</comment>
<comment type="interaction">
    <interactant intactId="EBI-78219">
        <id>P45973</id>
    </interactant>
    <interactant intactId="EBI-22002759">
        <id>Q9BZ95-3</id>
        <label>NSD3</label>
    </interactant>
    <organismsDiffer>false</organismsDiffer>
    <experiments>3</experiments>
</comment>
<comment type="interaction">
    <interactant intactId="EBI-78219">
        <id>P45973</id>
    </interactant>
    <interactant intactId="EBI-2554690">
        <id>Q96IY1</id>
        <label>NSL1</label>
    </interactant>
    <organismsDiffer>false</organismsDiffer>
    <experiments>6</experiments>
</comment>
<comment type="interaction">
    <interactant intactId="EBI-78219">
        <id>P45973</id>
    </interactant>
    <interactant intactId="EBI-25836582">
        <id>Q9NUD9</id>
        <label>PIGV</label>
    </interactant>
    <organismsDiffer>false</organismsDiffer>
    <experiments>3</experiments>
</comment>
<comment type="interaction">
    <interactant intactId="EBI-78219">
        <id>P45973</id>
    </interactant>
    <interactant intactId="EBI-1389308">
        <id>Q7Z3K3</id>
        <label>POGZ</label>
    </interactant>
    <organismsDiffer>false</organismsDiffer>
    <experiments>8</experiments>
</comment>
<comment type="interaction">
    <interactant intactId="EBI-78219">
        <id>P45973</id>
    </interactant>
    <interactant intactId="EBI-78615">
        <id>Q07869</id>
        <label>PPARA</label>
    </interactant>
    <organismsDiffer>false</organismsDiffer>
    <experiments>3</experiments>
</comment>
<comment type="interaction">
    <interactant intactId="EBI-78219">
        <id>P45973</id>
    </interactant>
    <interactant intactId="EBI-748167">
        <id>Q9BWN1</id>
        <label>PRR14</label>
    </interactant>
    <organismsDiffer>false</organismsDiffer>
    <experiments>12</experiments>
</comment>
<comment type="interaction">
    <interactant intactId="EBI-78219">
        <id>P45973</id>
    </interactant>
    <interactant intactId="EBI-766251">
        <id>Q9BQF6</id>
        <label>SENP7</label>
    </interactant>
    <organismsDiffer>false</organismsDiffer>
    <experiments>4</experiments>
</comment>
<comment type="interaction">
    <interactant intactId="EBI-78219">
        <id>P45973</id>
    </interactant>
    <interactant intactId="EBI-989069">
        <id>Q5FBB7</id>
        <label>SGO1</label>
    </interactant>
    <organismsDiffer>false</organismsDiffer>
    <experiments>4</experiments>
</comment>
<comment type="interaction">
    <interactant intactId="EBI-78219">
        <id>P45973</id>
    </interactant>
    <interactant intactId="EBI-21504521">
        <id>Q8NCS7</id>
        <label>SLC44A5</label>
    </interactant>
    <organismsDiffer>false</organismsDiffer>
    <experiments>3</experiments>
</comment>
<comment type="interaction">
    <interactant intactId="EBI-78219">
        <id>P45973</id>
    </interactant>
    <interactant intactId="EBI-12938570">
        <id>Q16560-2</id>
        <label>SNRNP35</label>
    </interactant>
    <organismsDiffer>false</organismsDiffer>
    <experiments>3</experiments>
</comment>
<comment type="interaction">
    <interactant intactId="EBI-78219">
        <id>P45973</id>
    </interactant>
    <interactant intactId="EBI-6589365">
        <id>P23497-2</id>
        <label>SP100</label>
    </interactant>
    <organismsDiffer>false</organismsDiffer>
    <experiments>7</experiments>
</comment>
<comment type="interaction">
    <interactant intactId="EBI-78219">
        <id>P45973</id>
    </interactant>
    <interactant intactId="EBI-349968">
        <id>O43463</id>
        <label>SUV39H1</label>
    </interactant>
    <organismsDiffer>false</organismsDiffer>
    <experiments>18</experiments>
</comment>
<comment type="interaction">
    <interactant intactId="EBI-78219">
        <id>P45973</id>
    </interactant>
    <interactant intactId="EBI-954089">
        <id>O15273</id>
        <label>TCAP</label>
    </interactant>
    <organismsDiffer>false</organismsDiffer>
    <experiments>6</experiments>
</comment>
<comment type="interaction">
    <interactant intactId="EBI-78219">
        <id>P45973</id>
    </interactant>
    <interactant intactId="EBI-765817">
        <id>Q9Y228</id>
        <label>TRAF3IP3</label>
    </interactant>
    <organismsDiffer>false</organismsDiffer>
    <experiments>3</experiments>
</comment>
<comment type="interaction">
    <interactant intactId="EBI-78219">
        <id>P45973</id>
    </interactant>
    <interactant intactId="EBI-78139">
        <id>Q13263</id>
        <label>TRIM28</label>
    </interactant>
    <organismsDiffer>false</organismsDiffer>
    <experiments>15</experiments>
</comment>
<comment type="interaction">
    <interactant intactId="EBI-78219">
        <id>P45973</id>
    </interactant>
    <interactant intactId="EBI-368417">
        <id>Q14191</id>
        <label>WRN</label>
    </interactant>
    <organismsDiffer>false</organismsDiffer>
    <experiments>3</experiments>
</comment>
<comment type="interaction">
    <interactant intactId="EBI-78219">
        <id>P45973</id>
    </interactant>
    <interactant intactId="EBI-765538">
        <id>P25490</id>
        <label>YY1</label>
    </interactant>
    <organismsDiffer>false</organismsDiffer>
    <experiments>3</experiments>
</comment>
<comment type="interaction">
    <interactant intactId="EBI-78219">
        <id>P45973</id>
    </interactant>
    <interactant intactId="EBI-8831272">
        <id>Q8ND82</id>
        <label>ZNF280C</label>
    </interactant>
    <organismsDiffer>false</organismsDiffer>
    <experiments>3</experiments>
</comment>
<comment type="interaction">
    <interactant intactId="EBI-78219">
        <id>P45973</id>
    </interactant>
    <interactant intactId="EBI-12027202">
        <id>Q6N043-2</id>
        <label>ZNF280D</label>
    </interactant>
    <organismsDiffer>false</organismsDiffer>
    <experiments>3</experiments>
</comment>
<comment type="interaction">
    <interactant intactId="EBI-78219">
        <id>P45973</id>
    </interactant>
    <interactant intactId="EBI-8871796">
        <id>Q5ZUS4</id>
        <label>legAS4</label>
    </interactant>
    <organismsDiffer>true</organismsDiffer>
    <experiments>6</experiments>
</comment>
<comment type="subcellular location">
    <subcellularLocation>
        <location evidence="6 13 28">Nucleus</location>
    </subcellularLocation>
    <subcellularLocation>
        <location evidence="6">Chromosome</location>
    </subcellularLocation>
    <subcellularLocation>
        <location evidence="6 18 25">Chromosome</location>
        <location evidence="6 18 25">Centromere</location>
    </subcellularLocation>
    <text evidence="13 28">Colocalizes with HNRNPU in the nucleus (PubMed:19617346). Component of centromeric and pericentromeric heterochromatin. Associates with chromosomes during mitosis. Associates specifically with chromatin during metaphase and anaphase (PubMed:19617346). Localizes to sites of DNA damage (PubMed:28977666).</text>
</comment>
<comment type="PTM">
    <text evidence="1 6">Phosphorylation of HP1 and LBR may be responsible for some of the alterations in chromatin organization and nuclear structure which occur at various times during the cell cycle (By similarity). Phosphorylated during interphase and possibly hyper-phosphorylated during mitosis.</text>
</comment>
<comment type="PTM">
    <text evidence="19">Ubiquitinated.</text>
</comment>
<comment type="caution">
    <text evidence="31 32">Was previously reported to interact with ASXL1. However, this publication has been retracted.</text>
</comment>
<protein>
    <recommendedName>
        <fullName>Chromobox protein homolog 5</fullName>
    </recommendedName>
    <alternativeName>
        <fullName>Antigen p25</fullName>
    </alternativeName>
    <alternativeName>
        <fullName>Heterochromatin protein 1 homolog alpha</fullName>
        <shortName>HP1 alpha</shortName>
    </alternativeName>
</protein>
<feature type="chain" id="PRO_0000080208" description="Chromobox protein homolog 5">
    <location>
        <begin position="1"/>
        <end position="191"/>
    </location>
</feature>
<feature type="domain" description="Chromo 1" evidence="4">
    <location>
        <begin position="20"/>
        <end position="78"/>
    </location>
</feature>
<feature type="domain" description="Chromo 2; shadow subtype" evidence="4">
    <location>
        <begin position="121"/>
        <end position="179"/>
    </location>
</feature>
<feature type="region of interest" description="Disordered" evidence="5">
    <location>
        <begin position="70"/>
        <end position="117"/>
    </location>
</feature>
<feature type="compositionally biased region" description="Basic and acidic residues" evidence="5">
    <location>
        <begin position="73"/>
        <end position="89"/>
    </location>
</feature>
<feature type="modified residue" description="Phosphoserine" evidence="33 35 36 39">
    <location>
        <position position="11"/>
    </location>
</feature>
<feature type="modified residue" description="Phosphoserine" evidence="33 36 39">
    <location>
        <position position="12"/>
    </location>
</feature>
<feature type="modified residue" description="Phosphoserine" evidence="33 36 37 39">
    <location>
        <position position="13"/>
    </location>
</feature>
<feature type="modified residue" description="Phosphoserine" evidence="33 35 36 37 38 39">
    <location>
        <position position="14"/>
    </location>
</feature>
<feature type="modified residue" description="N6-acetyllysine" evidence="2">
    <location>
        <position position="40"/>
    </location>
</feature>
<feature type="modified residue" description="Phosphoserine" evidence="33 34 35 36 38">
    <location>
        <position position="92"/>
    </location>
</feature>
<feature type="modified residue" description="Phosphoserine" evidence="37 38">
    <location>
        <position position="95"/>
    </location>
</feature>
<feature type="modified residue" description="Phosphoserine" evidence="35 36 37">
    <location>
        <position position="97"/>
    </location>
</feature>
<feature type="cross-link" description="Glycyl lysine isopeptide (Lys-Gly) (interchain with G-Cter in SUMO2)" evidence="40 41 42 43">
    <location>
        <position position="32"/>
    </location>
</feature>
<feature type="cross-link" description="Glycyl lysine isopeptide (Lys-Gly) (interchain with G-Cter in SUMO2)" evidence="43">
    <location>
        <position position="91"/>
    </location>
</feature>
<feature type="cross-link" description="Glycyl lysine isopeptide (Lys-Gly) (interchain with G-Cter in SUMO2)" evidence="40 41 42 43">
    <location>
        <position position="102"/>
    </location>
</feature>
<feature type="cross-link" description="Glycyl lysine isopeptide (Lys-Gly) (interchain with G-Cter in SUMO2)" evidence="43">
    <location>
        <position position="106"/>
    </location>
</feature>
<feature type="cross-link" description="Glycyl lysine isopeptide (Lys-Gly) (interchain with G-Cter in SUMO2)" evidence="43">
    <location>
        <position position="154"/>
    </location>
</feature>
<feature type="cross-link" description="Glycyl lysine isopeptide (Lys-Gly) (interchain with G-Cter in SUMO2)" evidence="43">
    <location>
        <position position="184"/>
    </location>
</feature>
<feature type="mutagenesis site" description="No effect on interaction with POGZ. Abolishes interaction with TRIM28, CHAF1A and NIPBL. Abolishes interaction with NSL1." evidence="18 20">
    <original>I</original>
    <variation>E</variation>
    <location>
        <position position="165"/>
    </location>
</feature>
<feature type="mutagenesis site" description="Abolishes interaction with NSL1." evidence="18">
    <original>T</original>
    <variation>D</variation>
    <variation>K</variation>
    <location>
        <position position="173"/>
    </location>
</feature>
<feature type="mutagenesis site" description="Abolishes interaction with TRIM28, CHAF1A, NIPBL and HP1BP3, fails to localize to centromeres in mitosis. Abolishes interaction with NSL1." evidence="17 18 20 25">
    <original>W</original>
    <variation>A</variation>
    <location>
        <position position="174"/>
    </location>
</feature>
<feature type="strand" evidence="44">
    <location>
        <begin position="19"/>
        <end position="31"/>
    </location>
</feature>
<feature type="strand" evidence="44">
    <location>
        <begin position="34"/>
        <end position="41"/>
    </location>
</feature>
<feature type="helix" evidence="44">
    <location>
        <begin position="46"/>
        <end position="48"/>
    </location>
</feature>
<feature type="strand" evidence="44">
    <location>
        <begin position="50"/>
        <end position="53"/>
    </location>
</feature>
<feature type="helix" evidence="44">
    <location>
        <begin position="54"/>
        <end position="56"/>
    </location>
</feature>
<feature type="helix" evidence="44">
    <location>
        <begin position="60"/>
        <end position="67"/>
    </location>
</feature>
<feature type="helix" evidence="45">
    <location>
        <begin position="116"/>
        <end position="119"/>
    </location>
</feature>
<feature type="strand" evidence="45">
    <location>
        <begin position="123"/>
        <end position="130"/>
    </location>
</feature>
<feature type="strand" evidence="45">
    <location>
        <begin position="137"/>
        <end position="142"/>
    </location>
</feature>
<feature type="strand" evidence="45">
    <location>
        <begin position="148"/>
        <end position="152"/>
    </location>
</feature>
<feature type="helix" evidence="45">
    <location>
        <begin position="153"/>
        <end position="159"/>
    </location>
</feature>
<feature type="helix" evidence="45">
    <location>
        <begin position="161"/>
        <end position="168"/>
    </location>
</feature>
<keyword id="KW-0002">3D-structure</keyword>
<keyword id="KW-0007">Acetylation</keyword>
<keyword id="KW-0137">Centromere</keyword>
<keyword id="KW-0158">Chromosome</keyword>
<keyword id="KW-0903">Direct protein sequencing</keyword>
<keyword id="KW-0945">Host-virus interaction</keyword>
<keyword id="KW-1017">Isopeptide bond</keyword>
<keyword id="KW-0539">Nucleus</keyword>
<keyword id="KW-0597">Phosphoprotein</keyword>
<keyword id="KW-1267">Proteomics identification</keyword>
<keyword id="KW-1185">Reference proteome</keyword>
<keyword id="KW-0677">Repeat</keyword>
<keyword id="KW-0832">Ubl conjugation</keyword>
<organism>
    <name type="scientific">Homo sapiens</name>
    <name type="common">Human</name>
    <dbReference type="NCBI Taxonomy" id="9606"/>
    <lineage>
        <taxon>Eukaryota</taxon>
        <taxon>Metazoa</taxon>
        <taxon>Chordata</taxon>
        <taxon>Craniata</taxon>
        <taxon>Vertebrata</taxon>
        <taxon>Euteleostomi</taxon>
        <taxon>Mammalia</taxon>
        <taxon>Eutheria</taxon>
        <taxon>Euarchontoglires</taxon>
        <taxon>Primates</taxon>
        <taxon>Haplorrhini</taxon>
        <taxon>Catarrhini</taxon>
        <taxon>Hominidae</taxon>
        <taxon>Homo</taxon>
    </lineage>
</organism>
<reference key="1">
    <citation type="journal article" date="1993" name="J. Cell Sci.">
        <title>Molecular cloning of a human homologue of Drosophila heterochromatin protein HP1 using anti-centromere autoantibodies with anti-chromo specificity.</title>
        <authorList>
            <person name="Saunders W.S."/>
            <person name="Chue C."/>
            <person name="Goebl M."/>
            <person name="Craig C."/>
            <person name="Clark R.F."/>
            <person name="Powers J.A."/>
            <person name="Eissenberg J.C."/>
            <person name="Elgin S.C.R."/>
            <person name="Rothfield N.F."/>
            <person name="Earnshaw W.C."/>
        </authorList>
    </citation>
    <scope>NUCLEOTIDE SEQUENCE [MRNA]</scope>
</reference>
<reference key="2">
    <citation type="journal article" date="2004" name="Nat. Genet.">
        <title>Complete sequencing and characterization of 21,243 full-length human cDNAs.</title>
        <authorList>
            <person name="Ota T."/>
            <person name="Suzuki Y."/>
            <person name="Nishikawa T."/>
            <person name="Otsuki T."/>
            <person name="Sugiyama T."/>
            <person name="Irie R."/>
            <person name="Wakamatsu A."/>
            <person name="Hayashi K."/>
            <person name="Sato H."/>
            <person name="Nagai K."/>
            <person name="Kimura K."/>
            <person name="Makita H."/>
            <person name="Sekine M."/>
            <person name="Obayashi M."/>
            <person name="Nishi T."/>
            <person name="Shibahara T."/>
            <person name="Tanaka T."/>
            <person name="Ishii S."/>
            <person name="Yamamoto J."/>
            <person name="Saito K."/>
            <person name="Kawai Y."/>
            <person name="Isono Y."/>
            <person name="Nakamura Y."/>
            <person name="Nagahari K."/>
            <person name="Murakami K."/>
            <person name="Yasuda T."/>
            <person name="Iwayanagi T."/>
            <person name="Wagatsuma M."/>
            <person name="Shiratori A."/>
            <person name="Sudo H."/>
            <person name="Hosoiri T."/>
            <person name="Kaku Y."/>
            <person name="Kodaira H."/>
            <person name="Kondo H."/>
            <person name="Sugawara M."/>
            <person name="Takahashi M."/>
            <person name="Kanda K."/>
            <person name="Yokoi T."/>
            <person name="Furuya T."/>
            <person name="Kikkawa E."/>
            <person name="Omura Y."/>
            <person name="Abe K."/>
            <person name="Kamihara K."/>
            <person name="Katsuta N."/>
            <person name="Sato K."/>
            <person name="Tanikawa M."/>
            <person name="Yamazaki M."/>
            <person name="Ninomiya K."/>
            <person name="Ishibashi T."/>
            <person name="Yamashita H."/>
            <person name="Murakawa K."/>
            <person name="Fujimori K."/>
            <person name="Tanai H."/>
            <person name="Kimata M."/>
            <person name="Watanabe M."/>
            <person name="Hiraoka S."/>
            <person name="Chiba Y."/>
            <person name="Ishida S."/>
            <person name="Ono Y."/>
            <person name="Takiguchi S."/>
            <person name="Watanabe S."/>
            <person name="Yosida M."/>
            <person name="Hotuta T."/>
            <person name="Kusano J."/>
            <person name="Kanehori K."/>
            <person name="Takahashi-Fujii A."/>
            <person name="Hara H."/>
            <person name="Tanase T.-O."/>
            <person name="Nomura Y."/>
            <person name="Togiya S."/>
            <person name="Komai F."/>
            <person name="Hara R."/>
            <person name="Takeuchi K."/>
            <person name="Arita M."/>
            <person name="Imose N."/>
            <person name="Musashino K."/>
            <person name="Yuuki H."/>
            <person name="Oshima A."/>
            <person name="Sasaki N."/>
            <person name="Aotsuka S."/>
            <person name="Yoshikawa Y."/>
            <person name="Matsunawa H."/>
            <person name="Ichihara T."/>
            <person name="Shiohata N."/>
            <person name="Sano S."/>
            <person name="Moriya S."/>
            <person name="Momiyama H."/>
            <person name="Satoh N."/>
            <person name="Takami S."/>
            <person name="Terashima Y."/>
            <person name="Suzuki O."/>
            <person name="Nakagawa S."/>
            <person name="Senoh A."/>
            <person name="Mizoguchi H."/>
            <person name="Goto Y."/>
            <person name="Shimizu F."/>
            <person name="Wakebe H."/>
            <person name="Hishigaki H."/>
            <person name="Watanabe T."/>
            <person name="Sugiyama A."/>
            <person name="Takemoto M."/>
            <person name="Kawakami B."/>
            <person name="Yamazaki M."/>
            <person name="Watanabe K."/>
            <person name="Kumagai A."/>
            <person name="Itakura S."/>
            <person name="Fukuzumi Y."/>
            <person name="Fujimori Y."/>
            <person name="Komiyama M."/>
            <person name="Tashiro H."/>
            <person name="Tanigami A."/>
            <person name="Fujiwara T."/>
            <person name="Ono T."/>
            <person name="Yamada K."/>
            <person name="Fujii Y."/>
            <person name="Ozaki K."/>
            <person name="Hirao M."/>
            <person name="Ohmori Y."/>
            <person name="Kawabata A."/>
            <person name="Hikiji T."/>
            <person name="Kobatake N."/>
            <person name="Inagaki H."/>
            <person name="Ikema Y."/>
            <person name="Okamoto S."/>
            <person name="Okitani R."/>
            <person name="Kawakami T."/>
            <person name="Noguchi S."/>
            <person name="Itoh T."/>
            <person name="Shigeta K."/>
            <person name="Senba T."/>
            <person name="Matsumura K."/>
            <person name="Nakajima Y."/>
            <person name="Mizuno T."/>
            <person name="Morinaga M."/>
            <person name="Sasaki M."/>
            <person name="Togashi T."/>
            <person name="Oyama M."/>
            <person name="Hata H."/>
            <person name="Watanabe M."/>
            <person name="Komatsu T."/>
            <person name="Mizushima-Sugano J."/>
            <person name="Satoh T."/>
            <person name="Shirai Y."/>
            <person name="Takahashi Y."/>
            <person name="Nakagawa K."/>
            <person name="Okumura K."/>
            <person name="Nagase T."/>
            <person name="Nomura N."/>
            <person name="Kikuchi H."/>
            <person name="Masuho Y."/>
            <person name="Yamashita R."/>
            <person name="Nakai K."/>
            <person name="Yada T."/>
            <person name="Nakamura Y."/>
            <person name="Ohara O."/>
            <person name="Isogai T."/>
            <person name="Sugano S."/>
        </authorList>
    </citation>
    <scope>NUCLEOTIDE SEQUENCE [LARGE SCALE MRNA]</scope>
    <source>
        <tissue>Kidney</tissue>
    </source>
</reference>
<reference key="3">
    <citation type="submission" date="2005-07" db="EMBL/GenBank/DDBJ databases">
        <authorList>
            <person name="Mural R.J."/>
            <person name="Istrail S."/>
            <person name="Sutton G.G."/>
            <person name="Florea L."/>
            <person name="Halpern A.L."/>
            <person name="Mobarry C.M."/>
            <person name="Lippert R."/>
            <person name="Walenz B."/>
            <person name="Shatkay H."/>
            <person name="Dew I."/>
            <person name="Miller J.R."/>
            <person name="Flanigan M.J."/>
            <person name="Edwards N.J."/>
            <person name="Bolanos R."/>
            <person name="Fasulo D."/>
            <person name="Halldorsson B.V."/>
            <person name="Hannenhalli S."/>
            <person name="Turner R."/>
            <person name="Yooseph S."/>
            <person name="Lu F."/>
            <person name="Nusskern D.R."/>
            <person name="Shue B.C."/>
            <person name="Zheng X.H."/>
            <person name="Zhong F."/>
            <person name="Delcher A.L."/>
            <person name="Huson D.H."/>
            <person name="Kravitz S.A."/>
            <person name="Mouchard L."/>
            <person name="Reinert K."/>
            <person name="Remington K.A."/>
            <person name="Clark A.G."/>
            <person name="Waterman M.S."/>
            <person name="Eichler E.E."/>
            <person name="Adams M.D."/>
            <person name="Hunkapiller M.W."/>
            <person name="Myers E.W."/>
            <person name="Venter J.C."/>
        </authorList>
    </citation>
    <scope>NUCLEOTIDE SEQUENCE [LARGE SCALE GENOMIC DNA]</scope>
</reference>
<reference key="4">
    <citation type="journal article" date="2004" name="Genome Res.">
        <title>The status, quality, and expansion of the NIH full-length cDNA project: the Mammalian Gene Collection (MGC).</title>
        <authorList>
            <consortium name="The MGC Project Team"/>
        </authorList>
    </citation>
    <scope>NUCLEOTIDE SEQUENCE [LARGE SCALE MRNA]</scope>
    <source>
        <tissue>Placenta</tissue>
    </source>
</reference>
<reference key="5">
    <citation type="journal article" date="1996" name="J. Biol. Chem.">
        <title>Interaction between an integral protein of the nuclear envelope inner membrane and human chromodomain proteins homologous to Drosophila HP1.</title>
        <authorList>
            <person name="Ye Q."/>
            <person name="Worman H.J."/>
        </authorList>
    </citation>
    <scope>NUCLEOTIDE SEQUENCE [MRNA] OF 2-191</scope>
</reference>
<reference key="6">
    <citation type="submission" date="2008-12" db="UniProtKB">
        <authorList>
            <person name="Lubec G."/>
            <person name="Chen W.-Q."/>
            <person name="Sun Y."/>
        </authorList>
    </citation>
    <scope>PROTEIN SEQUENCE OF 33-40; 56-68; 126-154 AND 160-184</scope>
    <scope>IDENTIFICATION BY MASS SPECTROMETRY</scope>
    <source>
        <tissue>Fetal brain cortex</tissue>
    </source>
</reference>
<reference key="7">
    <citation type="journal article" date="1997" name="J. Biol. Chem.">
        <title>Domain-specific interactions of human HP1-type chromodomain proteins and inner nuclear membrane protein LBR.</title>
        <authorList>
            <person name="Ye Q."/>
            <person name="Callebaut I."/>
            <person name="Pezhman A."/>
            <person name="Courvalin J.-C."/>
            <person name="Worman H.J."/>
        </authorList>
    </citation>
    <scope>INTERACTION WITH LBR AND CBX3</scope>
</reference>
<reference key="8">
    <citation type="journal article" date="1999" name="Chromosoma">
        <title>Localization and phosphorylation of HP1 proteins during the cell cycle in mammalian cells.</title>
        <authorList>
            <person name="Minc E."/>
            <person name="Allory Y."/>
            <person name="Worman H.J."/>
            <person name="Courvalin J.-C."/>
            <person name="Buendia B."/>
        </authorList>
    </citation>
    <scope>SUBCELLULAR LOCATION</scope>
    <scope>PHOSPHORYLATION</scope>
</reference>
<reference key="9">
    <citation type="journal article" date="2001" name="Mol. Cell. Biol.">
        <title>Common properties of nuclear protein SP100 and TIF1alpha chromatin factor: role of SUMO modification.</title>
        <authorList>
            <person name="Seeler J.-S."/>
            <person name="Marchio A."/>
            <person name="Losson R."/>
            <person name="Desterro J.M.P."/>
            <person name="Hay R.T."/>
            <person name="Chambon P."/>
            <person name="Dejean A."/>
        </authorList>
    </citation>
    <scope>INTERACTION WITH TRIM24</scope>
</reference>
<reference key="10">
    <citation type="journal article" date="2001" name="Nature">
        <title>Methylation of histone H3 lysine 9 creates a binding site for HP1 proteins.</title>
        <authorList>
            <person name="Lachner M."/>
            <person name="O'Carroll D."/>
            <person name="Rea S."/>
            <person name="Mechtler K."/>
            <person name="Jenuwein T."/>
        </authorList>
    </citation>
    <scope>INTERACTION WITH HISTONE H3 LYS-9</scope>
</reference>
<reference key="11">
    <citation type="journal article" date="2004" name="Nat. Cell Biol.">
        <title>A conserved Mis12 centromere complex is linked to heterochromatic HP1 and outer kinetochore protein Zwint-1.</title>
        <authorList>
            <person name="Obuse C."/>
            <person name="Iwasaki O."/>
            <person name="Kiyomitsu T."/>
            <person name="Goshima G."/>
            <person name="Toyoda Y."/>
            <person name="Yanagida M."/>
        </authorList>
    </citation>
    <scope>INTERACTION WITH MIS12 AND DSN1</scope>
</reference>
<reference key="12">
    <citation type="journal article" date="2005" name="Biochem. Biophys. Res. Commun.">
        <title>The mammalian heterochromatin protein 1 binds diverse nuclear proteins through a common motif that targets the chromoshadow domain.</title>
        <authorList>
            <person name="Lechner M.S."/>
            <person name="Schultz D.C."/>
            <person name="Negorev D."/>
            <person name="Maul G.G."/>
            <person name="Rauscher F.J. III"/>
        </authorList>
    </citation>
    <scope>INTERACTION WITH ATRX; CHAF1A; LBR; NIPBL; SP100; STAM2 AND TRIM28</scope>
</reference>
<reference key="13">
    <citation type="journal article" date="2005" name="EMBO Rep.">
        <title>Dissociation of heterochromatin protein 1 from lamin B receptor induced by human polyomavirus agnoprotein: role in nuclear egress of viral particles.</title>
        <authorList>
            <person name="Okada Y."/>
            <person name="Suzuki T."/>
            <person name="Sunden Y."/>
            <person name="Orba Y."/>
            <person name="Kose S."/>
            <person name="Imamoto N."/>
            <person name="Takahashi H."/>
            <person name="Tanaka S."/>
            <person name="Hall W.W."/>
            <person name="Nagashima K."/>
            <person name="Sawa H."/>
        </authorList>
    </citation>
    <scope>INTERACTION WITH JC VIRUS AGNOPROTEIN (MICROBIAL INFECTION)</scope>
</reference>
<reference key="14">
    <citation type="journal article" date="2005" name="Mol. Cell. Biol.">
        <title>In vivo HP1 targeting causes large-scale chromatin condensation and enhanced histone lysine methylation.</title>
        <authorList>
            <person name="Verschure P.J."/>
            <person name="van der Kraan I."/>
            <person name="de Leeuw W."/>
            <person name="van der Vlag J."/>
            <person name="Carpenter A.E."/>
            <person name="Belmont A.S."/>
            <person name="van Driel R."/>
        </authorList>
    </citation>
    <scope>INTERACTION WITH SETDB1</scope>
</reference>
<reference key="15">
    <citation type="journal article" date="2006" name="Cell">
        <title>Global, in vivo, and site-specific phosphorylation dynamics in signaling networks.</title>
        <authorList>
            <person name="Olsen J.V."/>
            <person name="Blagoev B."/>
            <person name="Gnad F."/>
            <person name="Macek B."/>
            <person name="Kumar C."/>
            <person name="Mortensen P."/>
            <person name="Mann M."/>
        </authorList>
    </citation>
    <scope>IDENTIFICATION BY MASS SPECTROMETRY [LARGE SCALE ANALYSIS]</scope>
    <source>
        <tissue>Cervix carcinoma</tissue>
    </source>
</reference>
<reference key="16">
    <citation type="journal article" date="2008" name="Mol. Cell">
        <title>Kinase-selective enrichment enables quantitative phosphoproteomics of the kinome across the cell cycle.</title>
        <authorList>
            <person name="Daub H."/>
            <person name="Olsen J.V."/>
            <person name="Bairlein M."/>
            <person name="Gnad F."/>
            <person name="Oppermann F.S."/>
            <person name="Korner R."/>
            <person name="Greff Z."/>
            <person name="Keri G."/>
            <person name="Stemmann O."/>
            <person name="Mann M."/>
        </authorList>
    </citation>
    <scope>PHOSPHORYLATION [LARGE SCALE ANALYSIS] AT SER-92</scope>
    <scope>IDENTIFICATION BY MASS SPECTROMETRY [LARGE SCALE ANALYSIS]</scope>
    <source>
        <tissue>Cervix carcinoma</tissue>
    </source>
</reference>
<reference key="17">
    <citation type="journal article" date="2008" name="Proc. Natl. Acad. Sci. U.S.A.">
        <title>A quantitative atlas of mitotic phosphorylation.</title>
        <authorList>
            <person name="Dephoure N."/>
            <person name="Zhou C."/>
            <person name="Villen J."/>
            <person name="Beausoleil S.A."/>
            <person name="Bakalarski C.E."/>
            <person name="Elledge S.J."/>
            <person name="Gygi S.P."/>
        </authorList>
    </citation>
    <scope>PHOSPHORYLATION [LARGE SCALE ANALYSIS] AT SER-11; SER-12; SER-13; SER-14 AND SER-92</scope>
    <scope>IDENTIFICATION BY MASS SPECTROMETRY [LARGE SCALE ANALYSIS]</scope>
    <source>
        <tissue>Cervix carcinoma</tissue>
    </source>
</reference>
<reference key="18">
    <citation type="journal article" date="2009" name="J. Biol. Chem.">
        <title>Physical and functional interaction between heterochromatin protein 1alpha and the RNA-binding protein heterogeneous nuclear ribonucleoprotein U.</title>
        <authorList>
            <person name="Ameyar-Zazoua M."/>
            <person name="Souidi M."/>
            <person name="Fritsch L."/>
            <person name="Robin P."/>
            <person name="Thomas A."/>
            <person name="Hamiche A."/>
            <person name="Percipalle P."/>
            <person name="Ait-Si-Ali S."/>
            <person name="Harel-Bellan A."/>
        </authorList>
    </citation>
    <scope>INTERACTION WITH HNRNPU</scope>
    <scope>SUBCELLULAR LOCATION</scope>
</reference>
<reference key="19">
    <citation type="journal article" date="2009" name="J. Biol. Chem.">
        <title>The metastasis efficiency modifier ribosomal RNA processing 1 homolog B (RRP1B) is a chromatin-associated factor.</title>
        <authorList>
            <person name="Crawford N.P."/>
            <person name="Yang H."/>
            <person name="Mattaini K.R."/>
            <person name="Hunter K.W."/>
        </authorList>
    </citation>
    <scope>INTERACTION WITH RRP1B</scope>
</reference>
<reference key="20">
    <citation type="journal article" date="2009" name="Nature">
        <title>JAK2 phosphorylates histone H3Y41 and excludes HP1alpha from chromatin.</title>
        <authorList>
            <person name="Dawson M.A."/>
            <person name="Bannister A.J."/>
            <person name="Gottgens B."/>
            <person name="Foster S.D."/>
            <person name="Bartke T."/>
            <person name="Green A.R."/>
            <person name="Kouzarides T."/>
        </authorList>
    </citation>
    <scope>FUNCTION</scope>
    <scope>HISTONE-BINDING</scope>
</reference>
<reference key="21">
    <citation type="journal article" date="2009" name="Proc. Natl. Acad. Sci. U.S.A.">
        <title>Human BAHD1 promotes heterochromatic gene silencing.</title>
        <authorList>
            <person name="Bierne H."/>
            <person name="Tham T.N."/>
            <person name="Batsche E."/>
            <person name="Dumay A."/>
            <person name="Leguillou M."/>
            <person name="Kerneis-Golsteyn S."/>
            <person name="Regnault B."/>
            <person name="Seeler J.S."/>
            <person name="Muchardt C."/>
            <person name="Feunteun J."/>
            <person name="Cossart P."/>
        </authorList>
    </citation>
    <scope>INTERACTION WITH BAHD1</scope>
</reference>
<reference key="22">
    <citation type="journal article" date="2009" name="Sci. Signal.">
        <title>Quantitative phosphoproteomic analysis of T cell receptor signaling reveals system-wide modulation of protein-protein interactions.</title>
        <authorList>
            <person name="Mayya V."/>
            <person name="Lundgren D.H."/>
            <person name="Hwang S.-I."/>
            <person name="Rezaul K."/>
            <person name="Wu L."/>
            <person name="Eng J.K."/>
            <person name="Rodionov V."/>
            <person name="Han D.K."/>
        </authorList>
    </citation>
    <scope>PHOSPHORYLATION [LARGE SCALE ANALYSIS] AT SER-11; SER-14; SER-92 AND SER-97</scope>
    <scope>IDENTIFICATION BY MASS SPECTROMETRY [LARGE SCALE ANALYSIS]</scope>
    <source>
        <tissue>Leukemic T-cell</tissue>
    </source>
</reference>
<reference key="23">
    <citation type="journal article" date="2010" name="Cell">
        <title>Quantitative interaction proteomics and genome-wide profiling of epigenetic histone marks and their readers.</title>
        <authorList>
            <person name="Vermeulen M."/>
            <person name="Eberl H.C."/>
            <person name="Matarese F."/>
            <person name="Marks H."/>
            <person name="Denissov S."/>
            <person name="Butter F."/>
            <person name="Lee K.K."/>
            <person name="Olsen J.V."/>
            <person name="Hyman A.A."/>
            <person name="Stunnenberg H.G."/>
            <person name="Mann M."/>
        </authorList>
    </citation>
    <scope>INTERACTION WITH CHAMP1 AND POGZ</scope>
</reference>
<reference key="24">
    <citation type="journal article" date="2010" name="J. Biol. Chem.">
        <title>ASXL1 represses retinoic acid receptor-mediated transcription through associating with HP1 and LSD1.</title>
        <authorList>
            <person name="Lee S.W."/>
            <person name="Cho Y.S."/>
            <person name="Na J.M."/>
            <person name="Park U.H."/>
            <person name="Kang M."/>
            <person name="Kim E.J."/>
            <person name="Um S.J."/>
        </authorList>
    </citation>
    <scope>RETRACTED PAPER</scope>
</reference>
<reference key="25">
    <citation type="journal article" date="2015" name="J. Biol. Chem.">
        <title>Retraction: 'ASXL1 represses retinoic acid receptor-mediated transcription through associating with HP1 and LSD1'.</title>
        <authorList>
            <person name="Lee S.W."/>
            <person name="Cho Y.S."/>
            <person name="Na J.M."/>
            <person name="Park U.H."/>
            <person name="Kang M."/>
            <person name="Kim E.J."/>
            <person name="Um S.J."/>
        </authorList>
    </citation>
    <scope>RETRACTION NOTICE OF PUBMED:19880879</scope>
</reference>
<reference key="26">
    <citation type="journal article" date="2010" name="J. Cell Biol.">
        <title>Inner centromere formation requires hMis14, a trident kinetochore protein that specifically recruits HP1 to human chromosomes.</title>
        <authorList>
            <person name="Kiyomitsu T."/>
            <person name="Iwasaki O."/>
            <person name="Obuse C."/>
            <person name="Yanagida M."/>
        </authorList>
    </citation>
    <scope>FUNCTION</scope>
    <scope>INTERACTION WITH NSL1 AND AURKB</scope>
    <scope>SUBCELLULAR LOCATION</scope>
    <scope>MUTAGENESIS OF ILE-165; THR-173 AND TRP-174</scope>
</reference>
<reference key="27">
    <citation type="journal article" date="2010" name="J. Cell Biol.">
        <title>The MIS12 complex is a protein interaction hub for outer kinetochore assembly.</title>
        <authorList>
            <person name="Petrovic A."/>
            <person name="Pasqualato S."/>
            <person name="Dube P."/>
            <person name="Krenn V."/>
            <person name="Santaguida S."/>
            <person name="Cittaro D."/>
            <person name="Monzani S."/>
            <person name="Massimiliano L."/>
            <person name="Keller J."/>
            <person name="Tarricone A."/>
            <person name="Maiolica A."/>
            <person name="Stark H."/>
            <person name="Musacchio A."/>
        </authorList>
    </citation>
    <scope>SUBUNIT</scope>
    <scope>INTERACTION WITH NSL1</scope>
</reference>
<reference key="28">
    <citation type="journal article" date="2010" name="Nat. Cell Biol.">
        <title>Human POGZ modulates dissociation of HP1alpha from mitotic chromosome arms through Aurora B activation.</title>
        <authorList>
            <person name="Nozawa R.S."/>
            <person name="Nagao K."/>
            <person name="Masuda H.T."/>
            <person name="Iwasaki O."/>
            <person name="Hirota T."/>
            <person name="Nozaki N."/>
            <person name="Kimura H."/>
            <person name="Obuse C."/>
        </authorList>
    </citation>
    <scope>INTERACTION WITH POGZ; TRIM28; CHAF1A; NIPBL AND INCENP</scope>
    <scope>MUTAGENESIS OF ILE-165 AND TRP-174</scope>
</reference>
<reference key="29">
    <citation type="journal article" date="2010" name="PLoS ONE">
        <title>Lamin A rod domain mutants target heterochromatin protein 1alpha and beta for proteasomal degradation by activation of F-box protein, FBXW10.</title>
        <authorList>
            <person name="Chaturvedi P."/>
            <person name="Parnaik V.K."/>
        </authorList>
    </citation>
    <scope>UBIQUITINATION</scope>
</reference>
<reference key="30">
    <citation type="journal article" date="2010" name="Sci. Signal.">
        <title>Quantitative phosphoproteomics reveals widespread full phosphorylation site occupancy during mitosis.</title>
        <authorList>
            <person name="Olsen J.V."/>
            <person name="Vermeulen M."/>
            <person name="Santamaria A."/>
            <person name="Kumar C."/>
            <person name="Miller M.L."/>
            <person name="Jensen L.J."/>
            <person name="Gnad F."/>
            <person name="Cox J."/>
            <person name="Jensen T.S."/>
            <person name="Nigg E.A."/>
            <person name="Brunak S."/>
            <person name="Mann M."/>
        </authorList>
    </citation>
    <scope>PHOSPHORYLATION [LARGE SCALE ANALYSIS] AT SER-11; SER-12; SER-13; SER-14; SER-92 AND SER-97</scope>
    <scope>IDENTIFICATION BY MASS SPECTROMETRY [LARGE SCALE ANALYSIS]</scope>
    <source>
        <tissue>Cervix carcinoma</tissue>
    </source>
</reference>
<reference key="31">
    <citation type="journal article" date="2011" name="BMC Syst. Biol.">
        <title>Initial characterization of the human central proteome.</title>
        <authorList>
            <person name="Burkard T.R."/>
            <person name="Planyavsky M."/>
            <person name="Kaupe I."/>
            <person name="Breitwieser F.P."/>
            <person name="Buerckstuemmer T."/>
            <person name="Bennett K.L."/>
            <person name="Superti-Furga G."/>
            <person name="Colinge J."/>
        </authorList>
    </citation>
    <scope>IDENTIFICATION BY MASS SPECTROMETRY [LARGE SCALE ANALYSIS]</scope>
</reference>
<reference key="32">
    <citation type="journal article" date="2011" name="Mol. Biol. Cell">
        <title>Mitotic centromeric targeting of HP1 and its binding to Sgo1 are dispensable for sister-chromatid cohesion in human cells.</title>
        <authorList>
            <person name="Kang J."/>
            <person name="Chaudhary J."/>
            <person name="Dong H."/>
            <person name="Kim S."/>
            <person name="Brautigam C.A."/>
            <person name="Yu H."/>
        </authorList>
    </citation>
    <scope>INTERACTION WITH INCENP</scope>
    <scope>SUBCELLULAR LOCATION</scope>
    <scope>MUTAGENESIS OF TRP-174</scope>
</reference>
<reference key="33">
    <citation type="journal article" date="2011" name="Mol. Cell. Biol.">
        <title>Protein interaction domain mapping of human kinetochore protein Blinkin reveals a consensus motif for binding of spindle assembly checkpoint proteins Bub1 and BubR1.</title>
        <authorList>
            <person name="Kiyomitsu T."/>
            <person name="Murakami H."/>
            <person name="Yanagida M."/>
        </authorList>
    </citation>
    <scope>INTERACTION WITH MIS12</scope>
</reference>
<reference key="34">
    <citation type="journal article" date="2011" name="Sci. Signal.">
        <title>System-wide temporal characterization of the proteome and phosphoproteome of human embryonic stem cell differentiation.</title>
        <authorList>
            <person name="Rigbolt K.T."/>
            <person name="Prokhorova T.A."/>
            <person name="Akimov V."/>
            <person name="Henningsen J."/>
            <person name="Johansen P.T."/>
            <person name="Kratchmarova I."/>
            <person name="Kassem M."/>
            <person name="Mann M."/>
            <person name="Olsen J.V."/>
            <person name="Blagoev B."/>
        </authorList>
    </citation>
    <scope>PHOSPHORYLATION [LARGE SCALE ANALYSIS] AT SER-13; SER-14; SER-95 AND SER-97</scope>
    <scope>IDENTIFICATION BY MASS SPECTROMETRY [LARGE SCALE ANALYSIS]</scope>
</reference>
<reference key="35">
    <citation type="journal article" date="2012" name="Proc. Natl. Acad. Sci. U.S.A.">
        <title>N-terminal acetylome analyses and functional insights of the N-terminal acetyltransferase NatB.</title>
        <authorList>
            <person name="Van Damme P."/>
            <person name="Lasa M."/>
            <person name="Polevoda B."/>
            <person name="Gazquez C."/>
            <person name="Elosegui-Artola A."/>
            <person name="Kim D.S."/>
            <person name="De Juan-Pardo E."/>
            <person name="Demeyer K."/>
            <person name="Hole K."/>
            <person name="Larrea E."/>
            <person name="Timmerman E."/>
            <person name="Prieto J."/>
            <person name="Arnesen T."/>
            <person name="Sherman F."/>
            <person name="Gevaert K."/>
            <person name="Aldabe R."/>
        </authorList>
    </citation>
    <scope>IDENTIFICATION BY MASS SPECTROMETRY [LARGE SCALE ANALYSIS]</scope>
</reference>
<reference key="36">
    <citation type="journal article" date="2013" name="J. Proteome Res.">
        <title>Toward a comprehensive characterization of a human cancer cell phosphoproteome.</title>
        <authorList>
            <person name="Zhou H."/>
            <person name="Di Palma S."/>
            <person name="Preisinger C."/>
            <person name="Peng M."/>
            <person name="Polat A.N."/>
            <person name="Heck A.J."/>
            <person name="Mohammed S."/>
        </authorList>
    </citation>
    <scope>PHOSPHORYLATION [LARGE SCALE ANALYSIS] AT SER-14; SER-92 AND SER-95</scope>
    <scope>IDENTIFICATION BY MASS SPECTROMETRY [LARGE SCALE ANALYSIS]</scope>
    <source>
        <tissue>Cervix carcinoma</tissue>
        <tissue>Erythroleukemia</tissue>
    </source>
</reference>
<reference key="37">
    <citation type="journal article" date="2013" name="Nat. Struct. Mol. Biol.">
        <title>Human inactive X chromosome is compacted through a PRC2-independent SMCHD1-HBiX1 pathway.</title>
        <authorList>
            <person name="Nozawa R.S."/>
            <person name="Nagao K."/>
            <person name="Igami K.T."/>
            <person name="Shibata S."/>
            <person name="Shirai N."/>
            <person name="Nozaki N."/>
            <person name="Sado T."/>
            <person name="Kimura H."/>
            <person name="Obuse C."/>
        </authorList>
    </citation>
    <scope>INTERACTION WITH LRIF1</scope>
</reference>
<reference key="38">
    <citation type="journal article" date="2014" name="J. Proteomics">
        <title>An enzyme assisted RP-RPLC approach for in-depth analysis of human liver phosphoproteome.</title>
        <authorList>
            <person name="Bian Y."/>
            <person name="Song C."/>
            <person name="Cheng K."/>
            <person name="Dong M."/>
            <person name="Wang F."/>
            <person name="Huang J."/>
            <person name="Sun D."/>
            <person name="Wang L."/>
            <person name="Ye M."/>
            <person name="Zou H."/>
        </authorList>
    </citation>
    <scope>PHOSPHORYLATION [LARGE SCALE ANALYSIS] AT SER-11; SER-12; SER-13 AND SER-14</scope>
    <scope>IDENTIFICATION BY MASS SPECTROMETRY [LARGE SCALE ANALYSIS]</scope>
    <source>
        <tissue>Liver</tissue>
    </source>
</reference>
<reference key="39">
    <citation type="journal article" date="2014" name="Nat. Struct. Mol. Biol.">
        <title>Uncovering global SUMOylation signaling networks in a site-specific manner.</title>
        <authorList>
            <person name="Hendriks I.A."/>
            <person name="D'Souza R.C."/>
            <person name="Yang B."/>
            <person name="Verlaan-de Vries M."/>
            <person name="Mann M."/>
            <person name="Vertegaal A.C."/>
        </authorList>
    </citation>
    <scope>SUMOYLATION [LARGE SCALE ANALYSIS] AT LYS-32 AND LYS-102</scope>
    <scope>IDENTIFICATION BY MASS SPECTROMETRY [LARGE SCALE ANALYSIS]</scope>
</reference>
<reference key="40">
    <citation type="journal article" date="2015" name="Cell Death Dis.">
        <title>A novel role of PRR14 in the regulation of skeletal myogenesis.</title>
        <authorList>
            <person name="Yang M."/>
            <person name="Yuan Z.M."/>
        </authorList>
    </citation>
    <scope>INTERACTION WITH PRR14</scope>
</reference>
<reference key="41">
    <citation type="journal article" date="2015" name="Cell Rep.">
        <title>SUMO-2 orchestrates chromatin modifiers in response to DNA damage.</title>
        <authorList>
            <person name="Hendriks I.A."/>
            <person name="Treffers L.W."/>
            <person name="Verlaan-de Vries M."/>
            <person name="Olsen J.V."/>
            <person name="Vertegaal A.C."/>
        </authorList>
    </citation>
    <scope>SUMOYLATION [LARGE SCALE ANALYSIS] AT LYS-32 AND LYS-102</scope>
    <scope>IDENTIFICATION BY MASS SPECTROMETRY [LARGE SCALE ANALYSIS]</scope>
</reference>
<reference key="42">
    <citation type="journal article" date="2015" name="Mol. Cell. Proteomics">
        <title>System-wide analysis of SUMOylation dynamics in response to replication stress reveals novel small ubiquitin-like modified target proteins and acceptor lysines relevant for genome stability.</title>
        <authorList>
            <person name="Xiao Z."/>
            <person name="Chang J.G."/>
            <person name="Hendriks I.A."/>
            <person name="Sigurdsson J.O."/>
            <person name="Olsen J.V."/>
            <person name="Vertegaal A.C."/>
        </authorList>
    </citation>
    <scope>SUMOYLATION [LARGE SCALE ANALYSIS] AT LYS-32 AND LYS-102</scope>
    <scope>IDENTIFICATION BY MASS SPECTROMETRY [LARGE SCALE ANALYSIS]</scope>
</reference>
<reference key="43">
    <citation type="journal article" date="2017" name="Nat. Struct. Mol. Biol.">
        <title>Site-specific mapping of the human SUMO proteome reveals co-modification with phosphorylation.</title>
        <authorList>
            <person name="Hendriks I.A."/>
            <person name="Lyon D."/>
            <person name="Young C."/>
            <person name="Jensen L.J."/>
            <person name="Vertegaal A.C."/>
            <person name="Nielsen M.L."/>
        </authorList>
    </citation>
    <scope>SUMOYLATION [LARGE SCALE ANALYSIS] AT LYS-32; LYS-91; LYS-102; LYS-106; LYS-154 AND LYS-184</scope>
    <scope>IDENTIFICATION BY MASS SPECTROMETRY [LARGE SCALE ANALYSIS]</scope>
</reference>
<reference key="44">
    <citation type="journal article" date="2017" name="Nucleic Acids Res.">
        <title>CHD3 and CHD4 form distinct NuRD complexes with different yet overlapping functionality.</title>
        <authorList>
            <person name="Hoffmeister H."/>
            <person name="Fuchs A."/>
            <person name="Erdel F."/>
            <person name="Pinz S."/>
            <person name="Groebner-Ferreira R."/>
            <person name="Bruckmann A."/>
            <person name="Deutzmann R."/>
            <person name="Schwartz U."/>
            <person name="Maldonado R."/>
            <person name="Huber C."/>
            <person name="Dendorfer A.S."/>
            <person name="Rippe K."/>
            <person name="Laengst G."/>
        </authorList>
    </citation>
    <scope>INTERACTION WITH CHD3 AND CHD4</scope>
    <scope>SUBCELLULAR LOCATION</scope>
</reference>
<reference key="45">
    <citation type="journal article" date="2020" name="Oncogene">
        <title>The EGFR-ZNF263 signaling axis silences SIX3 in glioblastoma epigenetically.</title>
        <authorList>
            <person name="Yu Z."/>
            <person name="Feng J."/>
            <person name="Wang W."/>
            <person name="Deng Z."/>
            <person name="Zhang Y."/>
            <person name="Xiao L."/>
            <person name="Wang Z."/>
            <person name="Liu C."/>
            <person name="Liu Q."/>
            <person name="Chen S."/>
            <person name="Wu M."/>
        </authorList>
    </citation>
    <scope>INTERACTION WITH ZNF263</scope>
</reference>
<reference key="46">
    <citation type="journal article" date="2011" name="J. Biol. Chem.">
        <title>Recognition and specificity determinants of the human cbx chromodomains.</title>
        <authorList>
            <person name="Kaustov L."/>
            <person name="Ouyang H."/>
            <person name="Amaya M."/>
            <person name="Lemak A."/>
            <person name="Nady N."/>
            <person name="Duan S."/>
            <person name="Wasney G.A."/>
            <person name="Li Z."/>
            <person name="Vedadi M."/>
            <person name="Schapira M."/>
            <person name="Min J."/>
            <person name="Arrowsmith C.H."/>
        </authorList>
    </citation>
    <scope>X-RAY CRYSTALLOGRAPHY (2.0 ANGSTROMS) OF 18-75 IN COMPLEX WITH TRIMETHYLATED HISTONE H3 PEPTIDE</scope>
    <scope>SUBUNIT</scope>
    <scope>X-RAY CRYSTALLOGRAPHY (2.48 ANGSTROMS) OF 110-173</scope>
</reference>
<reference key="47">
    <citation type="journal article" date="2010" name="J. Biol. Chem.">
        <title>The middle region of an HP1-binding protein, HP1-BP74, associates with linker DNA at the entry/exit site of nucleosomal DNA.</title>
        <authorList>
            <person name="Hayashihara K."/>
            <person name="Uchiyama S."/>
            <person name="Shimamoto S."/>
            <person name="Kobayashi S."/>
            <person name="Tomschik M."/>
            <person name="Wakamatsu H."/>
            <person name="No D."/>
            <person name="Sugahara H."/>
            <person name="Hori N."/>
            <person name="Noda M."/>
            <person name="Ohkubo T."/>
            <person name="Zlatanova J."/>
            <person name="Matsunaga S."/>
            <person name="Fukui K."/>
        </authorList>
    </citation>
    <scope>INTERACTION WITH HP1BP3</scope>
    <scope>MUTAGENESIS OF TRP-174</scope>
</reference>